<protein>
    <recommendedName>
        <fullName evidence="1">Peptide chain release factor 1</fullName>
        <shortName evidence="1">RF-1</shortName>
    </recommendedName>
</protein>
<accession>Q81JX1</accession>
<accession>Q6HQH1</accession>
<accession>Q6KJU5</accession>
<feature type="chain" id="PRO_0000177625" description="Peptide chain release factor 1">
    <location>
        <begin position="1"/>
        <end position="355"/>
    </location>
</feature>
<feature type="modified residue" description="N5-methylglutamine" evidence="1">
    <location>
        <position position="233"/>
    </location>
</feature>
<organism>
    <name type="scientific">Bacillus anthracis</name>
    <dbReference type="NCBI Taxonomy" id="1392"/>
    <lineage>
        <taxon>Bacteria</taxon>
        <taxon>Bacillati</taxon>
        <taxon>Bacillota</taxon>
        <taxon>Bacilli</taxon>
        <taxon>Bacillales</taxon>
        <taxon>Bacillaceae</taxon>
        <taxon>Bacillus</taxon>
        <taxon>Bacillus cereus group</taxon>
    </lineage>
</organism>
<keyword id="KW-0963">Cytoplasm</keyword>
<keyword id="KW-0488">Methylation</keyword>
<keyword id="KW-0648">Protein biosynthesis</keyword>
<keyword id="KW-1185">Reference proteome</keyword>
<gene>
    <name evidence="1" type="primary">prfA</name>
    <name type="ordered locus">BA_5572</name>
    <name type="ordered locus">GBAA_5572</name>
    <name type="ordered locus">BAS5178</name>
</gene>
<name>RF1_BACAN</name>
<dbReference type="EMBL" id="AE016879">
    <property type="protein sequence ID" value="AAP29215.1"/>
    <property type="molecule type" value="Genomic_DNA"/>
</dbReference>
<dbReference type="EMBL" id="AE017334">
    <property type="protein sequence ID" value="AAT34715.1"/>
    <property type="molecule type" value="Genomic_DNA"/>
</dbReference>
<dbReference type="EMBL" id="AE017225">
    <property type="protein sequence ID" value="AAT57467.1"/>
    <property type="status" value="ALT_INIT"/>
    <property type="molecule type" value="Genomic_DNA"/>
</dbReference>
<dbReference type="RefSeq" id="NP_847729.1">
    <property type="nucleotide sequence ID" value="NC_003997.3"/>
</dbReference>
<dbReference type="RefSeq" id="WP_000887065.1">
    <property type="nucleotide sequence ID" value="NZ_WXXJ01000038.1"/>
</dbReference>
<dbReference type="SMR" id="Q81JX1"/>
<dbReference type="STRING" id="261594.GBAA_5572"/>
<dbReference type="DNASU" id="1085262"/>
<dbReference type="GeneID" id="75088515"/>
<dbReference type="KEGG" id="ban:BA_5572"/>
<dbReference type="KEGG" id="bar:GBAA_5572"/>
<dbReference type="KEGG" id="bat:BAS5178"/>
<dbReference type="PATRIC" id="fig|198094.11.peg.5531"/>
<dbReference type="eggNOG" id="COG0216">
    <property type="taxonomic scope" value="Bacteria"/>
</dbReference>
<dbReference type="HOGENOM" id="CLU_036856_0_1_9"/>
<dbReference type="OMA" id="DHRVGFK"/>
<dbReference type="OrthoDB" id="9806673at2"/>
<dbReference type="Proteomes" id="UP000000427">
    <property type="component" value="Chromosome"/>
</dbReference>
<dbReference type="Proteomes" id="UP000000594">
    <property type="component" value="Chromosome"/>
</dbReference>
<dbReference type="GO" id="GO:0005737">
    <property type="term" value="C:cytoplasm"/>
    <property type="evidence" value="ECO:0007669"/>
    <property type="project" value="UniProtKB-SubCell"/>
</dbReference>
<dbReference type="GO" id="GO:0016149">
    <property type="term" value="F:translation release factor activity, codon specific"/>
    <property type="evidence" value="ECO:0007669"/>
    <property type="project" value="UniProtKB-UniRule"/>
</dbReference>
<dbReference type="FunFam" id="3.30.160.20:FF:000004">
    <property type="entry name" value="Peptide chain release factor 1"/>
    <property type="match status" value="1"/>
</dbReference>
<dbReference type="FunFam" id="3.30.70.1660:FF:000002">
    <property type="entry name" value="Peptide chain release factor 1"/>
    <property type="match status" value="1"/>
</dbReference>
<dbReference type="FunFam" id="3.30.70.1660:FF:000004">
    <property type="entry name" value="Peptide chain release factor 1"/>
    <property type="match status" value="1"/>
</dbReference>
<dbReference type="Gene3D" id="3.30.160.20">
    <property type="match status" value="1"/>
</dbReference>
<dbReference type="Gene3D" id="3.30.70.1660">
    <property type="match status" value="1"/>
</dbReference>
<dbReference type="Gene3D" id="6.10.140.1950">
    <property type="match status" value="1"/>
</dbReference>
<dbReference type="HAMAP" id="MF_00093">
    <property type="entry name" value="Rel_fac_1"/>
    <property type="match status" value="1"/>
</dbReference>
<dbReference type="InterPro" id="IPR005139">
    <property type="entry name" value="PCRF"/>
</dbReference>
<dbReference type="InterPro" id="IPR000352">
    <property type="entry name" value="Pep_chain_release_fac_I"/>
</dbReference>
<dbReference type="InterPro" id="IPR045853">
    <property type="entry name" value="Pep_chain_release_fac_I_sf"/>
</dbReference>
<dbReference type="InterPro" id="IPR050057">
    <property type="entry name" value="Prokaryotic/Mito_RF"/>
</dbReference>
<dbReference type="InterPro" id="IPR004373">
    <property type="entry name" value="RF-1"/>
</dbReference>
<dbReference type="NCBIfam" id="TIGR00019">
    <property type="entry name" value="prfA"/>
    <property type="match status" value="1"/>
</dbReference>
<dbReference type="NCBIfam" id="NF001859">
    <property type="entry name" value="PRK00591.1"/>
    <property type="match status" value="1"/>
</dbReference>
<dbReference type="PANTHER" id="PTHR43804">
    <property type="entry name" value="LD18447P"/>
    <property type="match status" value="1"/>
</dbReference>
<dbReference type="PANTHER" id="PTHR43804:SF7">
    <property type="entry name" value="LD18447P"/>
    <property type="match status" value="1"/>
</dbReference>
<dbReference type="Pfam" id="PF03462">
    <property type="entry name" value="PCRF"/>
    <property type="match status" value="1"/>
</dbReference>
<dbReference type="Pfam" id="PF00472">
    <property type="entry name" value="RF-1"/>
    <property type="match status" value="1"/>
</dbReference>
<dbReference type="SMART" id="SM00937">
    <property type="entry name" value="PCRF"/>
    <property type="match status" value="1"/>
</dbReference>
<dbReference type="SUPFAM" id="SSF75620">
    <property type="entry name" value="Release factor"/>
    <property type="match status" value="1"/>
</dbReference>
<dbReference type="PROSITE" id="PS00745">
    <property type="entry name" value="RF_PROK_I"/>
    <property type="match status" value="1"/>
</dbReference>
<sequence length="355" mass="40356">MLDRLQAVENRYEKLNELLSDPAIISDSNKLREYSKEQSDIQETVEVYREYKDVREQLKDAKAMLEDKLDAEMREMVKEEVSELESQEKTLSERLKILLVPKDPNDDKNVIVEVRGAAGGDEAALFAGDLYRMYSRYAEVQGWKTEIIEASYTELGGYKEIIFMINGKGAFAKLKFENGAHRVQRVPETESGGRIHTSTATVAVLPEAEEVEIDIHEKDVRVDTFASSGPGGQSVNTTMSAVRLTHLPTGVVVSCQDEKSQIKNKEKAMKVLRARVYDKFRQEAQAEYDQNRKQAVGTGDRSERIRTYNFPQNRVTDHRIGLTIQKLDQILQGKLDDFINALVMEDQAQRMEAAE</sequence>
<reference key="1">
    <citation type="journal article" date="2003" name="Nature">
        <title>The genome sequence of Bacillus anthracis Ames and comparison to closely related bacteria.</title>
        <authorList>
            <person name="Read T.D."/>
            <person name="Peterson S.N."/>
            <person name="Tourasse N.J."/>
            <person name="Baillie L.W."/>
            <person name="Paulsen I.T."/>
            <person name="Nelson K.E."/>
            <person name="Tettelin H."/>
            <person name="Fouts D.E."/>
            <person name="Eisen J.A."/>
            <person name="Gill S.R."/>
            <person name="Holtzapple E.K."/>
            <person name="Okstad O.A."/>
            <person name="Helgason E."/>
            <person name="Rilstone J."/>
            <person name="Wu M."/>
            <person name="Kolonay J.F."/>
            <person name="Beanan M.J."/>
            <person name="Dodson R.J."/>
            <person name="Brinkac L.M."/>
            <person name="Gwinn M.L."/>
            <person name="DeBoy R.T."/>
            <person name="Madpu R."/>
            <person name="Daugherty S.C."/>
            <person name="Durkin A.S."/>
            <person name="Haft D.H."/>
            <person name="Nelson W.C."/>
            <person name="Peterson J.D."/>
            <person name="Pop M."/>
            <person name="Khouri H.M."/>
            <person name="Radune D."/>
            <person name="Benton J.L."/>
            <person name="Mahamoud Y."/>
            <person name="Jiang L."/>
            <person name="Hance I.R."/>
            <person name="Weidman J.F."/>
            <person name="Berry K.J."/>
            <person name="Plaut R.D."/>
            <person name="Wolf A.M."/>
            <person name="Watkins K.L."/>
            <person name="Nierman W.C."/>
            <person name="Hazen A."/>
            <person name="Cline R.T."/>
            <person name="Redmond C."/>
            <person name="Thwaite J.E."/>
            <person name="White O."/>
            <person name="Salzberg S.L."/>
            <person name="Thomason B."/>
            <person name="Friedlander A.M."/>
            <person name="Koehler T.M."/>
            <person name="Hanna P.C."/>
            <person name="Kolstoe A.-B."/>
            <person name="Fraser C.M."/>
        </authorList>
    </citation>
    <scope>NUCLEOTIDE SEQUENCE [LARGE SCALE GENOMIC DNA]</scope>
    <source>
        <strain>Ames / isolate Porton</strain>
    </source>
</reference>
<reference key="2">
    <citation type="journal article" date="2009" name="J. Bacteriol.">
        <title>The complete genome sequence of Bacillus anthracis Ames 'Ancestor'.</title>
        <authorList>
            <person name="Ravel J."/>
            <person name="Jiang L."/>
            <person name="Stanley S.T."/>
            <person name="Wilson M.R."/>
            <person name="Decker R.S."/>
            <person name="Read T.D."/>
            <person name="Worsham P."/>
            <person name="Keim P.S."/>
            <person name="Salzberg S.L."/>
            <person name="Fraser-Liggett C.M."/>
            <person name="Rasko D.A."/>
        </authorList>
    </citation>
    <scope>NUCLEOTIDE SEQUENCE [LARGE SCALE GENOMIC DNA]</scope>
    <source>
        <strain>Ames ancestor</strain>
    </source>
</reference>
<reference key="3">
    <citation type="submission" date="2004-01" db="EMBL/GenBank/DDBJ databases">
        <title>Complete genome sequence of Bacillus anthracis Sterne.</title>
        <authorList>
            <person name="Brettin T.S."/>
            <person name="Bruce D."/>
            <person name="Challacombe J.F."/>
            <person name="Gilna P."/>
            <person name="Han C."/>
            <person name="Hill K."/>
            <person name="Hitchcock P."/>
            <person name="Jackson P."/>
            <person name="Keim P."/>
            <person name="Longmire J."/>
            <person name="Lucas S."/>
            <person name="Okinaka R."/>
            <person name="Richardson P."/>
            <person name="Rubin E."/>
            <person name="Tice H."/>
        </authorList>
    </citation>
    <scope>NUCLEOTIDE SEQUENCE [LARGE SCALE GENOMIC DNA]</scope>
    <source>
        <strain>Sterne</strain>
    </source>
</reference>
<proteinExistence type="inferred from homology"/>
<comment type="function">
    <text evidence="1">Peptide chain release factor 1 directs the termination of translation in response to the peptide chain termination codons UAG and UAA.</text>
</comment>
<comment type="subcellular location">
    <subcellularLocation>
        <location evidence="1">Cytoplasm</location>
    </subcellularLocation>
</comment>
<comment type="PTM">
    <text evidence="1">Methylated by PrmC. Methylation increases the termination efficiency of RF1.</text>
</comment>
<comment type="similarity">
    <text evidence="1">Belongs to the prokaryotic/mitochondrial release factor family.</text>
</comment>
<comment type="sequence caution" evidence="2">
    <conflict type="erroneous initiation">
        <sequence resource="EMBL-CDS" id="AAT57467"/>
    </conflict>
</comment>
<evidence type="ECO:0000255" key="1">
    <source>
        <dbReference type="HAMAP-Rule" id="MF_00093"/>
    </source>
</evidence>
<evidence type="ECO:0000305" key="2"/>